<feature type="chain" id="PRO_0000182635" description="Flagellin FlaB2">
    <location>
        <begin position="1"/>
        <end position="286"/>
    </location>
</feature>
<keyword id="KW-0975">Bacterial flagellum</keyword>
<keyword id="KW-0903">Direct protein sequencing</keyword>
<keyword id="KW-0574">Periplasm</keyword>
<keyword id="KW-1185">Reference proteome</keyword>
<gene>
    <name evidence="2" type="primary">flaB2</name>
    <name type="ordered locus">TP_0792</name>
</gene>
<reference key="1">
    <citation type="journal article" date="1989" name="Infect. Immun.">
        <title>Cloning and sequencing of a Treponema pallidum gene encoding a 31.3-kilodalton endoflagellar subunit (FlaB2).</title>
        <authorList>
            <person name="Pallesen L."/>
            <person name="Hindersson P."/>
        </authorList>
    </citation>
    <scope>NUCLEOTIDE SEQUENCE [GENOMIC DNA]</scope>
</reference>
<reference key="2">
    <citation type="journal article" date="1998" name="Science">
        <title>Complete genome sequence of Treponema pallidum, the syphilis spirochete.</title>
        <authorList>
            <person name="Fraser C.M."/>
            <person name="Norris S.J."/>
            <person name="Weinstock G.M."/>
            <person name="White O."/>
            <person name="Sutton G.G."/>
            <person name="Dodson R.J."/>
            <person name="Gwinn M.L."/>
            <person name="Hickey E.K."/>
            <person name="Clayton R.A."/>
            <person name="Ketchum K.A."/>
            <person name="Sodergren E."/>
            <person name="Hardham J.M."/>
            <person name="McLeod M.P."/>
            <person name="Salzberg S.L."/>
            <person name="Peterson J.D."/>
            <person name="Khalak H.G."/>
            <person name="Richardson D.L."/>
            <person name="Howell J.K."/>
            <person name="Chidambaram M."/>
            <person name="Utterback T.R."/>
            <person name="McDonald L.A."/>
            <person name="Artiach P."/>
            <person name="Bowman C."/>
            <person name="Cotton M.D."/>
            <person name="Fujii C."/>
            <person name="Garland S.A."/>
            <person name="Hatch B."/>
            <person name="Horst K."/>
            <person name="Roberts K.M."/>
            <person name="Sandusky M."/>
            <person name="Weidman J.F."/>
            <person name="Smith H.O."/>
            <person name="Venter J.C."/>
        </authorList>
    </citation>
    <scope>NUCLEOTIDE SEQUENCE [LARGE SCALE GENOMIC DNA]</scope>
    <source>
        <strain>Nichols</strain>
    </source>
</reference>
<reference key="3">
    <citation type="journal article" date="1988" name="J. Bacteriol.">
        <title>Antigenic relatedness and N-terminal sequence homology define two classes of periplasmic flagellar proteins of Treponema pallidum subsp. pallidum and Treponema phagedenis.</title>
        <authorList>
            <person name="Norris S.J."/>
            <person name="Charon N.W."/>
            <person name="Cook R.G."/>
            <person name="Fuentes M.D."/>
            <person name="Limberger R.J."/>
        </authorList>
    </citation>
    <scope>PROTEIN SEQUENCE OF 1-21</scope>
</reference>
<reference key="4">
    <citation type="journal article" date="1988" name="Infect. Immun.">
        <title>Antigenic and structural characterization of Treponema pallidum (Nichols strain) endoflagella.</title>
        <authorList>
            <person name="Blanco D.R."/>
            <person name="Champion C.I."/>
            <person name="Miller J.N."/>
            <person name="Lovett M.A."/>
        </authorList>
    </citation>
    <scope>PROTEIN SEQUENCE OF 1-20</scope>
</reference>
<reference key="5">
    <citation type="journal article" date="2006" name="J. Bacteriol.">
        <title>Novel conserved assembly factor of the bacterial flagellum.</title>
        <authorList>
            <person name="Titz B."/>
            <person name="Rajagopala S.V."/>
            <person name="Ester C."/>
            <person name="Haeuser R."/>
            <person name="Uetz P."/>
        </authorList>
    </citation>
    <scope>INTERACTION WITH FLIW</scope>
    <source>
        <strain>Nichols</strain>
    </source>
</reference>
<dbReference type="EMBL" id="AE000520">
    <property type="protein sequence ID" value="AAC65757.1"/>
    <property type="molecule type" value="Genomic_DNA"/>
</dbReference>
<dbReference type="PIR" id="A37053">
    <property type="entry name" value="A37053"/>
</dbReference>
<dbReference type="RefSeq" id="WP_010882237.1">
    <property type="nucleotide sequence ID" value="NC_021490.2"/>
</dbReference>
<dbReference type="SMR" id="P21991"/>
<dbReference type="IntAct" id="P21991">
    <property type="interactions" value="6"/>
</dbReference>
<dbReference type="STRING" id="243276.TP_0792"/>
<dbReference type="EnsemblBacteria" id="AAC65757">
    <property type="protein sequence ID" value="AAC65757"/>
    <property type="gene ID" value="TP_0792"/>
</dbReference>
<dbReference type="KEGG" id="tpa:TP_0792"/>
<dbReference type="KEGG" id="tpw:TPANIC_0792"/>
<dbReference type="eggNOG" id="COG1344">
    <property type="taxonomic scope" value="Bacteria"/>
</dbReference>
<dbReference type="HOGENOM" id="CLU_011142_2_0_12"/>
<dbReference type="OrthoDB" id="9796789at2"/>
<dbReference type="Proteomes" id="UP000000811">
    <property type="component" value="Chromosome"/>
</dbReference>
<dbReference type="GO" id="GO:0055040">
    <property type="term" value="C:periplasmic flagellum"/>
    <property type="evidence" value="ECO:0007669"/>
    <property type="project" value="UniProtKB-SubCell"/>
</dbReference>
<dbReference type="GO" id="GO:0005198">
    <property type="term" value="F:structural molecule activity"/>
    <property type="evidence" value="ECO:0007669"/>
    <property type="project" value="InterPro"/>
</dbReference>
<dbReference type="Gene3D" id="1.20.1330.10">
    <property type="entry name" value="f41 fragment of flagellin, N-terminal domain"/>
    <property type="match status" value="1"/>
</dbReference>
<dbReference type="Gene3D" id="6.10.10.10">
    <property type="entry name" value="Flagellar export chaperone, C-terminal domain"/>
    <property type="match status" value="1"/>
</dbReference>
<dbReference type="InterPro" id="IPR001492">
    <property type="entry name" value="Flagellin"/>
</dbReference>
<dbReference type="InterPro" id="IPR046358">
    <property type="entry name" value="Flagellin_C"/>
</dbReference>
<dbReference type="InterPro" id="IPR042187">
    <property type="entry name" value="Flagellin_C_sub2"/>
</dbReference>
<dbReference type="InterPro" id="IPR001029">
    <property type="entry name" value="Flagellin_N"/>
</dbReference>
<dbReference type="PANTHER" id="PTHR42792">
    <property type="entry name" value="FLAGELLIN"/>
    <property type="match status" value="1"/>
</dbReference>
<dbReference type="PANTHER" id="PTHR42792:SF2">
    <property type="entry name" value="FLAGELLIN"/>
    <property type="match status" value="1"/>
</dbReference>
<dbReference type="Pfam" id="PF00700">
    <property type="entry name" value="Flagellin_C"/>
    <property type="match status" value="1"/>
</dbReference>
<dbReference type="Pfam" id="PF00669">
    <property type="entry name" value="Flagellin_N"/>
    <property type="match status" value="1"/>
</dbReference>
<dbReference type="PRINTS" id="PR00207">
    <property type="entry name" value="FLAGELLIN"/>
</dbReference>
<dbReference type="SUPFAM" id="SSF64518">
    <property type="entry name" value="Phase 1 flagellin"/>
    <property type="match status" value="1"/>
</dbReference>
<organism>
    <name type="scientific">Treponema pallidum (strain Nichols)</name>
    <dbReference type="NCBI Taxonomy" id="243276"/>
    <lineage>
        <taxon>Bacteria</taxon>
        <taxon>Pseudomonadati</taxon>
        <taxon>Spirochaetota</taxon>
        <taxon>Spirochaetia</taxon>
        <taxon>Spirochaetales</taxon>
        <taxon>Treponemataceae</taxon>
        <taxon>Treponema</taxon>
    </lineage>
</organism>
<comment type="function">
    <text>Component of the core of the flagella.</text>
</comment>
<comment type="subunit">
    <text evidence="1">The flagellum consists of an outer layer composed of repeating units of FlaA around a core that contains several antigenically related polypeptides. Interacts with FliW; a synthetic peptide of FlaB1 (residues 229-247) partially blocks binding of this protein to FliW (PubMed:16936039).</text>
</comment>
<comment type="subcellular location">
    <subcellularLocation>
        <location>Periplasmic flagellum</location>
    </subcellularLocation>
    <subcellularLocation>
        <location>Periplasm</location>
    </subcellularLocation>
</comment>
<comment type="similarity">
    <text evidence="3">Belongs to the bacterial flagellin family.</text>
</comment>
<protein>
    <recommendedName>
        <fullName evidence="3">Flagellin FlaB2</fullName>
    </recommendedName>
    <alternativeName>
        <fullName>Class B</fullName>
    </alternativeName>
    <alternativeName>
        <fullName>Flagellar filament 33 kDa core protein</fullName>
    </alternativeName>
</protein>
<name>FLAB2_TREPA</name>
<accession>P21991</accession>
<sequence>MIINHNMSAMFSQRTLGHTNLSVQKNIEKLSSGLRINRSGDDASGLAVSEKMRSQIRGLNQASTNAQNGISFIQVAEAFLQETTDVIQRIRELSVQAANGIYSAEDRLYIQVEVSQLVAEVDRIASHAQFNGMNMLTGRFARQGGENTVTASMWFHIGANMDQRTRAYIGTMTAVAMGIRDAGDESVMNIDSPEKANRAIGTLDQAIKRINKQRADLGAYQNRLDHTVAGINVAAENLQAAESRIRDVDMAKEMVDYTKNQILVQSGTAMLAQANQATQSVLSLLR</sequence>
<evidence type="ECO:0000269" key="1">
    <source>
    </source>
</evidence>
<evidence type="ECO:0000303" key="2">
    <source>
    </source>
</evidence>
<evidence type="ECO:0000305" key="3"/>
<proteinExistence type="evidence at protein level"/>